<accession>A0A644F0Y1</accession>
<accession>A8BQF3</accession>
<sequence length="472" mass="51870">MPREVITIQCGQCGNQIGEVFWNRLCTEHGINPDGTLRPEAYTFNDRKDVFFYQSDDEHYVPRAILLDTEPGVISHIRNGPIKELINPENVYIDSTGGGAGNIWTKGFQCGEAGFEKIVEIIDREADGADSLAGFSLTHSIAGGTGSGMGSFLLDRLSDRYPKALLQTYSVFPNTTADIIVQPYNSILTLQRLALCADAVVVLDNTALDRIITNHIPNELLTNPFEHVNSLVSTVMAASTSTLRLPGFMSNDLLSLVSSLVPTPRLHFLMSSYTPITSSSLNVKEHTKDQEAGSGAVAGAAAGATRRQVHTDSIVQLVKRLLHPTNGMVSCGRDGKYISLLNIVQGEAESNQLYKSLQQIKEGRDVKFIDWGPSNMQMALSKRSPFTNEAHKVSGLMLANHTAIRKIFDNINNTFTQLFSKRAYLQNYIDSMVTGGEPEILEQFTDAQAVCTSLSKEYEAAESKDYLEYIGM</sequence>
<gene>
    <name evidence="9" type="ORF">GL50803_00114218</name>
    <name evidence="8" type="ORF">GL50803_114218</name>
</gene>
<reference evidence="8 9 10" key="1">
    <citation type="journal article" date="2007" name="Science">
        <title>Genomic minimalism in the early diverging intestinal parasite Giardia lamblia.</title>
        <authorList>
            <person name="Morrison H.G."/>
            <person name="McArthur A.G."/>
            <person name="Gillin F.D."/>
            <person name="Aley S.B."/>
            <person name="Adam R.D."/>
            <person name="Olsen G.J."/>
            <person name="Best A.A."/>
            <person name="Cande W.Z."/>
            <person name="Chen F."/>
            <person name="Cipriano M.J."/>
            <person name="Davids B.J."/>
            <person name="Dawson S.C."/>
            <person name="Elmendorf H.G."/>
            <person name="Hehl A.B."/>
            <person name="Holder M.E."/>
            <person name="Huse S.M."/>
            <person name="Kim U.U."/>
            <person name="Lasek-Nesselquist E."/>
            <person name="Manning G."/>
            <person name="Nigam A."/>
            <person name="Nixon J.E.J."/>
            <person name="Palm D."/>
            <person name="Passamaneck N.E."/>
            <person name="Prabhu A."/>
            <person name="Reich C.I."/>
            <person name="Reiner D.S."/>
            <person name="Samuelson J."/>
            <person name="Svard S.G."/>
            <person name="Sogin M.L."/>
        </authorList>
    </citation>
    <scope>NUCLEOTIDE SEQUENCE [LARGE SCALE GENOMIC DNA]</scope>
    <source>
        <strain evidence="10">ATCC 50803 / WB clone C6</strain>
    </source>
</reference>
<reference key="2">
    <citation type="journal article" date="2000" name="Eur. J. Cell Biol.">
        <title>Localization of gamma-tubulin in interphase and mitotic cells of a unicellular eukaryote, Giardia intestinalis.</title>
        <authorList>
            <person name="Nohynkova E."/>
            <person name="Draber P."/>
            <person name="Reischig J."/>
            <person name="Kulda J."/>
        </authorList>
    </citation>
    <scope>SUBCELLULAR LOCATION</scope>
    <source>
        <strain evidence="5">Portland-1</strain>
    </source>
</reference>
<reference key="3">
    <citation type="journal article" date="2019" name="MicrobiologyOpen">
        <title>Roles of end-binding 1 protein and gamma-tubulin small complex in cytokinesis and flagella formation of Giardia lamblia.</title>
        <authorList>
            <person name="Kim J."/>
            <person name="Park S.J."/>
        </authorList>
    </citation>
    <scope>FUNCTION</scope>
    <scope>SUBUNIT</scope>
    <scope>INTERACTION WITH EB1; GCP2 AND GCP3</scope>
    <scope>SUBCELLULAR LOCATION</scope>
    <scope>DISRUPTION PHENOTYPE</scope>
    <source>
        <strain evidence="6">ATCC 30957 / WB</strain>
    </source>
</reference>
<dbReference type="EMBL" id="AACB02000033">
    <property type="protein sequence ID" value="EDO77838.1"/>
    <property type="status" value="ALT_INIT"/>
    <property type="molecule type" value="Genomic_DNA"/>
</dbReference>
<dbReference type="EMBL" id="AACB03000004">
    <property type="protein sequence ID" value="KAE8302020.1"/>
    <property type="molecule type" value="Genomic_DNA"/>
</dbReference>
<dbReference type="RefSeq" id="XP_001705512.1">
    <property type="nucleotide sequence ID" value="XM_001705460.1"/>
</dbReference>
<dbReference type="SMR" id="A0A644F0Y1"/>
<dbReference type="FunCoup" id="A0A644F0Y1">
    <property type="interactions" value="142"/>
</dbReference>
<dbReference type="STRING" id="184922.A0A644F0Y1"/>
<dbReference type="EnsemblProtists" id="EDO77838">
    <property type="protein sequence ID" value="EDO77838"/>
    <property type="gene ID" value="GL50803_114218"/>
</dbReference>
<dbReference type="GeneID" id="5698417"/>
<dbReference type="KEGG" id="gla:GL50803_00114218"/>
<dbReference type="VEuPathDB" id="GiardiaDB:GL50803_114218"/>
<dbReference type="HOGENOM" id="CLU_015718_1_0_1"/>
<dbReference type="InParanoid" id="A0A644F0Y1"/>
<dbReference type="Proteomes" id="UP000001548">
    <property type="component" value="Chromosome 2"/>
</dbReference>
<dbReference type="GO" id="GO:0097729">
    <property type="term" value="C:9+2 motile cilium"/>
    <property type="evidence" value="ECO:0000314"/>
    <property type="project" value="UniProtKB"/>
</dbReference>
<dbReference type="GO" id="GO:0005930">
    <property type="term" value="C:axoneme"/>
    <property type="evidence" value="ECO:0000314"/>
    <property type="project" value="UniProtKB"/>
</dbReference>
<dbReference type="GO" id="GO:0005813">
    <property type="term" value="C:centrosome"/>
    <property type="evidence" value="ECO:0000314"/>
    <property type="project" value="UniProtKB"/>
</dbReference>
<dbReference type="GO" id="GO:0036064">
    <property type="term" value="C:ciliary basal body"/>
    <property type="evidence" value="ECO:0000314"/>
    <property type="project" value="UniProtKB"/>
</dbReference>
<dbReference type="GO" id="GO:0005737">
    <property type="term" value="C:cytoplasm"/>
    <property type="evidence" value="ECO:0000318"/>
    <property type="project" value="GO_Central"/>
</dbReference>
<dbReference type="GO" id="GO:0000931">
    <property type="term" value="C:gamma-tubulin ring complex"/>
    <property type="evidence" value="ECO:0000318"/>
    <property type="project" value="GO_Central"/>
</dbReference>
<dbReference type="GO" id="GO:0008275">
    <property type="term" value="C:gamma-tubulin small complex"/>
    <property type="evidence" value="ECO:0000314"/>
    <property type="project" value="UniProtKB"/>
</dbReference>
<dbReference type="GO" id="GO:0097556">
    <property type="term" value="C:left posteriolateral flagellum"/>
    <property type="evidence" value="ECO:0000314"/>
    <property type="project" value="UniProtKB"/>
</dbReference>
<dbReference type="GO" id="GO:0097558">
    <property type="term" value="C:left ventral flagellum"/>
    <property type="evidence" value="ECO:0000314"/>
    <property type="project" value="UniProtKB"/>
</dbReference>
<dbReference type="GO" id="GO:0097568">
    <property type="term" value="C:median body"/>
    <property type="evidence" value="ECO:0000314"/>
    <property type="project" value="UniProtKB"/>
</dbReference>
<dbReference type="GO" id="GO:0005874">
    <property type="term" value="C:microtubule"/>
    <property type="evidence" value="ECO:0007669"/>
    <property type="project" value="UniProtKB-KW"/>
</dbReference>
<dbReference type="GO" id="GO:0005815">
    <property type="term" value="C:microtubule organizing center"/>
    <property type="evidence" value="ECO:0000314"/>
    <property type="project" value="UniProtKB"/>
</dbReference>
<dbReference type="GO" id="GO:0072686">
    <property type="term" value="C:mitotic spindle"/>
    <property type="evidence" value="ECO:0000314"/>
    <property type="project" value="UniProtKB"/>
</dbReference>
<dbReference type="GO" id="GO:0005634">
    <property type="term" value="C:nucleus"/>
    <property type="evidence" value="ECO:0000318"/>
    <property type="project" value="GO_Central"/>
</dbReference>
<dbReference type="GO" id="GO:0097557">
    <property type="term" value="C:right posteriolateral flagellum"/>
    <property type="evidence" value="ECO:0000314"/>
    <property type="project" value="UniProtKB"/>
</dbReference>
<dbReference type="GO" id="GO:0097559">
    <property type="term" value="C:right ventral flagellum"/>
    <property type="evidence" value="ECO:0000314"/>
    <property type="project" value="UniProtKB"/>
</dbReference>
<dbReference type="GO" id="GO:0005819">
    <property type="term" value="C:spindle"/>
    <property type="evidence" value="ECO:0000318"/>
    <property type="project" value="GO_Central"/>
</dbReference>
<dbReference type="GO" id="GO:0005525">
    <property type="term" value="F:GTP binding"/>
    <property type="evidence" value="ECO:0000318"/>
    <property type="project" value="GO_Central"/>
</dbReference>
<dbReference type="GO" id="GO:0140490">
    <property type="term" value="F:microtubule nucleator activity"/>
    <property type="evidence" value="ECO:0000318"/>
    <property type="project" value="GO_Central"/>
</dbReference>
<dbReference type="GO" id="GO:0035082">
    <property type="term" value="P:axoneme assembly"/>
    <property type="evidence" value="ECO:0000315"/>
    <property type="project" value="UniProtKB"/>
</dbReference>
<dbReference type="GO" id="GO:0031122">
    <property type="term" value="P:cytoplasmic microtubule organization"/>
    <property type="evidence" value="ECO:0000315"/>
    <property type="project" value="UniProtKB"/>
</dbReference>
<dbReference type="GO" id="GO:0000212">
    <property type="term" value="P:meiotic spindle organization"/>
    <property type="evidence" value="ECO:0000318"/>
    <property type="project" value="GO_Central"/>
</dbReference>
<dbReference type="GO" id="GO:0007020">
    <property type="term" value="P:microtubule nucleation"/>
    <property type="evidence" value="ECO:0000315"/>
    <property type="project" value="UniProtKB"/>
</dbReference>
<dbReference type="GO" id="GO:0000278">
    <property type="term" value="P:mitotic cell cycle"/>
    <property type="evidence" value="ECO:0000314"/>
    <property type="project" value="UniProtKB"/>
</dbReference>
<dbReference type="GO" id="GO:1903673">
    <property type="term" value="P:mitotic cleavage furrow formation"/>
    <property type="evidence" value="ECO:0000315"/>
    <property type="project" value="UniProtKB"/>
</dbReference>
<dbReference type="GO" id="GO:1902410">
    <property type="term" value="P:mitotic cytokinetic process"/>
    <property type="evidence" value="ECO:0000315"/>
    <property type="project" value="UniProtKB"/>
</dbReference>
<dbReference type="GO" id="GO:0000070">
    <property type="term" value="P:mitotic sister chromatid segregation"/>
    <property type="evidence" value="ECO:0000318"/>
    <property type="project" value="GO_Central"/>
</dbReference>
<dbReference type="GO" id="GO:0007052">
    <property type="term" value="P:mitotic spindle organization"/>
    <property type="evidence" value="ECO:0000318"/>
    <property type="project" value="GO_Central"/>
</dbReference>
<dbReference type="GO" id="GO:0044458">
    <property type="term" value="P:motile cilium assembly"/>
    <property type="evidence" value="ECO:0000315"/>
    <property type="project" value="UniProtKB"/>
</dbReference>
<dbReference type="CDD" id="cd02188">
    <property type="entry name" value="gamma_tubulin"/>
    <property type="match status" value="1"/>
</dbReference>
<dbReference type="Gene3D" id="1.10.287.600">
    <property type="entry name" value="Helix hairpin bin"/>
    <property type="match status" value="1"/>
</dbReference>
<dbReference type="Gene3D" id="3.30.1330.20">
    <property type="entry name" value="Tubulin/FtsZ, C-terminal domain"/>
    <property type="match status" value="1"/>
</dbReference>
<dbReference type="Gene3D" id="3.40.50.1440">
    <property type="entry name" value="Tubulin/FtsZ, GTPase domain"/>
    <property type="match status" value="1"/>
</dbReference>
<dbReference type="InterPro" id="IPR002454">
    <property type="entry name" value="Gamma_tubulin"/>
</dbReference>
<dbReference type="InterPro" id="IPR008280">
    <property type="entry name" value="Tub_FtsZ_C"/>
</dbReference>
<dbReference type="InterPro" id="IPR000217">
    <property type="entry name" value="Tubulin"/>
</dbReference>
<dbReference type="InterPro" id="IPR037103">
    <property type="entry name" value="Tubulin/FtsZ-like_C"/>
</dbReference>
<dbReference type="InterPro" id="IPR018316">
    <property type="entry name" value="Tubulin/FtsZ_2-layer-sand-dom"/>
</dbReference>
<dbReference type="InterPro" id="IPR036525">
    <property type="entry name" value="Tubulin/FtsZ_GTPase_sf"/>
</dbReference>
<dbReference type="InterPro" id="IPR023123">
    <property type="entry name" value="Tubulin_C"/>
</dbReference>
<dbReference type="InterPro" id="IPR017975">
    <property type="entry name" value="Tubulin_CS"/>
</dbReference>
<dbReference type="InterPro" id="IPR003008">
    <property type="entry name" value="Tubulin_FtsZ_GTPase"/>
</dbReference>
<dbReference type="PANTHER" id="PTHR11588">
    <property type="entry name" value="TUBULIN"/>
    <property type="match status" value="1"/>
</dbReference>
<dbReference type="Pfam" id="PF00091">
    <property type="entry name" value="Tubulin"/>
    <property type="match status" value="1"/>
</dbReference>
<dbReference type="Pfam" id="PF03953">
    <property type="entry name" value="Tubulin_C"/>
    <property type="match status" value="1"/>
</dbReference>
<dbReference type="PRINTS" id="PR01164">
    <property type="entry name" value="GAMMATUBULIN"/>
</dbReference>
<dbReference type="PRINTS" id="PR01161">
    <property type="entry name" value="TUBULIN"/>
</dbReference>
<dbReference type="SMART" id="SM00864">
    <property type="entry name" value="Tubulin"/>
    <property type="match status" value="1"/>
</dbReference>
<dbReference type="SMART" id="SM00865">
    <property type="entry name" value="Tubulin_C"/>
    <property type="match status" value="1"/>
</dbReference>
<dbReference type="SUPFAM" id="SSF55307">
    <property type="entry name" value="Tubulin C-terminal domain-like"/>
    <property type="match status" value="1"/>
</dbReference>
<dbReference type="SUPFAM" id="SSF52490">
    <property type="entry name" value="Tubulin nucleotide-binding domain-like"/>
    <property type="match status" value="1"/>
</dbReference>
<dbReference type="PROSITE" id="PS00227">
    <property type="entry name" value="TUBULIN"/>
    <property type="match status" value="1"/>
</dbReference>
<proteinExistence type="evidence at protein level"/>
<protein>
    <recommendedName>
        <fullName evidence="2 7">Tubulin gamma chain</fullName>
    </recommendedName>
    <alternativeName>
        <fullName evidence="5 6">Gamma-tubulin</fullName>
    </alternativeName>
    <alternativeName>
        <fullName evidence="6">Glgamma-tubulin</fullName>
    </alternativeName>
</protein>
<name>TBG_GIAIC</name>
<organism evidence="9 10">
    <name type="scientific">Giardia intestinalis (strain ATCC 50803 / WB clone C6)</name>
    <name type="common">Giardia lamblia</name>
    <dbReference type="NCBI Taxonomy" id="184922"/>
    <lineage>
        <taxon>Eukaryota</taxon>
        <taxon>Metamonada</taxon>
        <taxon>Diplomonadida</taxon>
        <taxon>Hexamitidae</taxon>
        <taxon>Giardiinae</taxon>
        <taxon>Giardia</taxon>
    </lineage>
</organism>
<feature type="chain" id="PRO_0000459116" description="Tubulin gamma chain">
    <location>
        <begin position="1"/>
        <end position="472"/>
    </location>
</feature>
<feature type="binding site" evidence="1">
    <location>
        <begin position="142"/>
        <end position="148"/>
    </location>
    <ligand>
        <name>GTP</name>
        <dbReference type="ChEBI" id="CHEBI:37565"/>
    </ligand>
</feature>
<evidence type="ECO:0000255" key="1"/>
<evidence type="ECO:0000255" key="2">
    <source>
        <dbReference type="RuleBase" id="RU000352"/>
    </source>
</evidence>
<evidence type="ECO:0000269" key="3">
    <source>
    </source>
</evidence>
<evidence type="ECO:0000269" key="4">
    <source>
    </source>
</evidence>
<evidence type="ECO:0000303" key="5">
    <source>
    </source>
</evidence>
<evidence type="ECO:0000303" key="6">
    <source>
    </source>
</evidence>
<evidence type="ECO:0000305" key="7"/>
<evidence type="ECO:0000312" key="8">
    <source>
        <dbReference type="EMBL" id="EDO77838.1"/>
    </source>
</evidence>
<evidence type="ECO:0000312" key="9">
    <source>
        <dbReference type="EMBL" id="KAE8302020.1"/>
    </source>
</evidence>
<evidence type="ECO:0000312" key="10">
    <source>
        <dbReference type="Proteomes" id="UP000001548"/>
    </source>
</evidence>
<keyword id="KW-0966">Cell projection</keyword>
<keyword id="KW-0969">Cilium</keyword>
<keyword id="KW-0963">Cytoplasm</keyword>
<keyword id="KW-0206">Cytoskeleton</keyword>
<keyword id="KW-0282">Flagellum</keyword>
<keyword id="KW-0342">GTP-binding</keyword>
<keyword id="KW-0493">Microtubule</keyword>
<keyword id="KW-0547">Nucleotide-binding</keyword>
<keyword id="KW-1185">Reference proteome</keyword>
<comment type="function">
    <text evidence="2 4">Tubulin is the major constituent of microtubules (Potential). The gamma chain is found at microtubule organizing centers (MTOC) such as the centrosome (PubMed:30318753). Component of the gamma-tubulin small complex (gamma-TuSC) involved in microtubule nucleation for the formation of median bodies and in the biogenesis of flagella (PubMed:30318753). Gamma-TuSC may be required for the correct positioning of EB1 within the trophozoites (PubMed:30318753).</text>
</comment>
<comment type="subunit">
    <text evidence="4">Component of the gamma-tubulin small complex (gamma-TuSC) composed of tubulin gamma chain, gamma-tubulin complex protein 2 (GCP2) and gamma-tubulin complex protein 3 (GCP3) (PubMed:30318753). Interacts with GCP2 and GCP3 (PubMed:30318753). Interacts with EB1 (PubMed:30318753).</text>
</comment>
<comment type="subcellular location">
    <subcellularLocation>
        <location evidence="4">Cytoplasm</location>
        <location evidence="4">Cytoskeleton</location>
        <location evidence="4">Flagellum axoneme</location>
    </subcellularLocation>
    <subcellularLocation>
        <location evidence="3 4">Cytoplasm</location>
        <location evidence="3 4">Cytoskeleton</location>
        <location evidence="3 4">Flagellum basal body</location>
    </subcellularLocation>
    <subcellularLocation>
        <location evidence="3 4">Cytoplasm</location>
        <location evidence="3 4">Cytoskeleton</location>
    </subcellularLocation>
    <subcellularLocation>
        <location evidence="4">Cytoplasm</location>
        <location evidence="4">Cytoskeleton</location>
        <location evidence="4">Spindle</location>
    </subcellularLocation>
    <subcellularLocation>
        <location evidence="4">Cytoplasm</location>
        <location evidence="4">Cytoskeleton</location>
        <location evidence="4">Microtubule organizing center</location>
    </subcellularLocation>
    <text evidence="3 4">Localizes mainly to basal bodies of trophozoites during interface (PubMed:30318753). Localizes as four dots at the basis of posterolateral and ventral flagellar pairs in interphase (PubMed:10928459). Also localizes to axonemes and median body in over half of the interphase cells (PubMed:30318753). Colocalizes with microtubules in the median bodies of the interphase cells (PubMed:30318753). Localizes to basal bodies and median bodies in dividing stages of the trophozoites (PubMed:30318753). The four dots are absent in late prophase and early metaphase, but reappear as tiny dots at the perikinetosomal areas of the separated parent flagella in anaphase (PubMed:10928459). Localizes transiently to the centers of the mitotic spindles in anaphase (PubMed:30318753). The four dots localize at the basal body regions of each daughter karyomastigont in telophase (PubMed:10928459). Colocalizes with centrin outside the two nuclei in telophase (PubMed:30318753). Localizes to basal bodies and axonemes of the two daughter cells during cytokinesis (PubMed:30318753). Does not localize at the spindle poles of the dividing nuclei (PubMed:10928459).</text>
</comment>
<comment type="disruption phenotype">
    <text evidence="4">Knockdown of expression by morpholino results in an arrest of cytokinesis, leading to reduced growth rate and increased number of cells with four nuclei. Knockdown has various defects including increased number of disorganized cells impertinent for cytokinesis and increased number of cells without furrow. However, knockdown does not have an effect on the number of cells defective in cytokinesis or abscission. Knockdown has reduced formation and volume of median bodies, increased number of posterolateral and ventral axonemes without central pair of flagellar microtubules (MTs), and reduced length of the caudal flagella. Knockdown does not affect central pair of flagellar MTs in anterior and caudal axonemes.</text>
</comment>
<comment type="similarity">
    <text evidence="2">Belongs to the tubulin family.</text>
</comment>
<comment type="sequence caution" evidence="7">
    <conflict type="erroneous initiation">
        <sequence resource="EMBL-CDS" id="EDO77838"/>
    </conflict>
    <text>Extended N-terminus.</text>
</comment>